<dbReference type="EC" id="7.4.2.8" evidence="1"/>
<dbReference type="EMBL" id="CP000942">
    <property type="protein sequence ID" value="ACA33223.1"/>
    <property type="molecule type" value="Genomic_DNA"/>
</dbReference>
<dbReference type="RefSeq" id="WP_006689106.1">
    <property type="nucleotide sequence ID" value="NC_010503.1"/>
</dbReference>
<dbReference type="SMR" id="B1AIA8"/>
<dbReference type="GeneID" id="29672143"/>
<dbReference type="KEGG" id="upa:UPA3_0125"/>
<dbReference type="HOGENOM" id="CLU_005314_3_0_14"/>
<dbReference type="Proteomes" id="UP000002162">
    <property type="component" value="Chromosome"/>
</dbReference>
<dbReference type="GO" id="GO:0031522">
    <property type="term" value="C:cell envelope Sec protein transport complex"/>
    <property type="evidence" value="ECO:0007669"/>
    <property type="project" value="TreeGrafter"/>
</dbReference>
<dbReference type="GO" id="GO:0005829">
    <property type="term" value="C:cytosol"/>
    <property type="evidence" value="ECO:0007669"/>
    <property type="project" value="TreeGrafter"/>
</dbReference>
<dbReference type="GO" id="GO:0005886">
    <property type="term" value="C:plasma membrane"/>
    <property type="evidence" value="ECO:0007669"/>
    <property type="project" value="UniProtKB-SubCell"/>
</dbReference>
<dbReference type="GO" id="GO:0005524">
    <property type="term" value="F:ATP binding"/>
    <property type="evidence" value="ECO:0007669"/>
    <property type="project" value="UniProtKB-UniRule"/>
</dbReference>
<dbReference type="GO" id="GO:0008564">
    <property type="term" value="F:protein-exporting ATPase activity"/>
    <property type="evidence" value="ECO:0007669"/>
    <property type="project" value="UniProtKB-EC"/>
</dbReference>
<dbReference type="GO" id="GO:0065002">
    <property type="term" value="P:intracellular protein transmembrane transport"/>
    <property type="evidence" value="ECO:0007669"/>
    <property type="project" value="UniProtKB-UniRule"/>
</dbReference>
<dbReference type="GO" id="GO:0017038">
    <property type="term" value="P:protein import"/>
    <property type="evidence" value="ECO:0007669"/>
    <property type="project" value="InterPro"/>
</dbReference>
<dbReference type="GO" id="GO:0006605">
    <property type="term" value="P:protein targeting"/>
    <property type="evidence" value="ECO:0007669"/>
    <property type="project" value="UniProtKB-UniRule"/>
</dbReference>
<dbReference type="GO" id="GO:0043952">
    <property type="term" value="P:protein transport by the Sec complex"/>
    <property type="evidence" value="ECO:0007669"/>
    <property type="project" value="TreeGrafter"/>
</dbReference>
<dbReference type="CDD" id="cd17928">
    <property type="entry name" value="DEXDc_SecA"/>
    <property type="match status" value="1"/>
</dbReference>
<dbReference type="CDD" id="cd18803">
    <property type="entry name" value="SF2_C_secA"/>
    <property type="match status" value="1"/>
</dbReference>
<dbReference type="FunFam" id="3.40.50.300:FF:000429">
    <property type="entry name" value="Preprotein translocase subunit SecA"/>
    <property type="match status" value="1"/>
</dbReference>
<dbReference type="Gene3D" id="1.10.3060.10">
    <property type="entry name" value="Helical scaffold and wing domains of SecA"/>
    <property type="match status" value="1"/>
</dbReference>
<dbReference type="Gene3D" id="3.40.50.300">
    <property type="entry name" value="P-loop containing nucleotide triphosphate hydrolases"/>
    <property type="match status" value="3"/>
</dbReference>
<dbReference type="Gene3D" id="3.90.1440.10">
    <property type="entry name" value="SecA, preprotein cross-linking domain"/>
    <property type="match status" value="1"/>
</dbReference>
<dbReference type="HAMAP" id="MF_01382">
    <property type="entry name" value="SecA"/>
    <property type="match status" value="1"/>
</dbReference>
<dbReference type="InterPro" id="IPR014001">
    <property type="entry name" value="Helicase_ATP-bd"/>
</dbReference>
<dbReference type="InterPro" id="IPR001650">
    <property type="entry name" value="Helicase_C-like"/>
</dbReference>
<dbReference type="InterPro" id="IPR027417">
    <property type="entry name" value="P-loop_NTPase"/>
</dbReference>
<dbReference type="InterPro" id="IPR000185">
    <property type="entry name" value="SecA"/>
</dbReference>
<dbReference type="InterPro" id="IPR020937">
    <property type="entry name" value="SecA_CS"/>
</dbReference>
<dbReference type="InterPro" id="IPR011115">
    <property type="entry name" value="SecA_DEAD"/>
</dbReference>
<dbReference type="InterPro" id="IPR014018">
    <property type="entry name" value="SecA_motor_DEAD"/>
</dbReference>
<dbReference type="InterPro" id="IPR011130">
    <property type="entry name" value="SecA_preprotein_X-link_dom"/>
</dbReference>
<dbReference type="InterPro" id="IPR044722">
    <property type="entry name" value="SecA_SF2_C"/>
</dbReference>
<dbReference type="InterPro" id="IPR011116">
    <property type="entry name" value="SecA_Wing/Scaffold"/>
</dbReference>
<dbReference type="InterPro" id="IPR036266">
    <property type="entry name" value="SecA_Wing/Scaffold_sf"/>
</dbReference>
<dbReference type="InterPro" id="IPR036670">
    <property type="entry name" value="SecA_X-link_sf"/>
</dbReference>
<dbReference type="NCBIfam" id="TIGR00963">
    <property type="entry name" value="secA"/>
    <property type="match status" value="1"/>
</dbReference>
<dbReference type="PANTHER" id="PTHR30612:SF0">
    <property type="entry name" value="CHLOROPLAST PROTEIN-TRANSPORTING ATPASE"/>
    <property type="match status" value="1"/>
</dbReference>
<dbReference type="PANTHER" id="PTHR30612">
    <property type="entry name" value="SECA INNER MEMBRANE COMPONENT OF SEC PROTEIN SECRETION SYSTEM"/>
    <property type="match status" value="1"/>
</dbReference>
<dbReference type="Pfam" id="PF21090">
    <property type="entry name" value="P-loop_SecA"/>
    <property type="match status" value="2"/>
</dbReference>
<dbReference type="Pfam" id="PF07517">
    <property type="entry name" value="SecA_DEAD"/>
    <property type="match status" value="1"/>
</dbReference>
<dbReference type="Pfam" id="PF01043">
    <property type="entry name" value="SecA_PP_bind"/>
    <property type="match status" value="1"/>
</dbReference>
<dbReference type="Pfam" id="PF07516">
    <property type="entry name" value="SecA_SW"/>
    <property type="match status" value="1"/>
</dbReference>
<dbReference type="PRINTS" id="PR00906">
    <property type="entry name" value="SECA"/>
</dbReference>
<dbReference type="SMART" id="SM00957">
    <property type="entry name" value="SecA_DEAD"/>
    <property type="match status" value="1"/>
</dbReference>
<dbReference type="SMART" id="SM00958">
    <property type="entry name" value="SecA_PP_bind"/>
    <property type="match status" value="1"/>
</dbReference>
<dbReference type="SUPFAM" id="SSF81886">
    <property type="entry name" value="Helical scaffold and wing domains of SecA"/>
    <property type="match status" value="1"/>
</dbReference>
<dbReference type="SUPFAM" id="SSF52540">
    <property type="entry name" value="P-loop containing nucleoside triphosphate hydrolases"/>
    <property type="match status" value="2"/>
</dbReference>
<dbReference type="SUPFAM" id="SSF81767">
    <property type="entry name" value="Pre-protein crosslinking domain of SecA"/>
    <property type="match status" value="1"/>
</dbReference>
<dbReference type="PROSITE" id="PS01312">
    <property type="entry name" value="SECA"/>
    <property type="match status" value="1"/>
</dbReference>
<dbReference type="PROSITE" id="PS51196">
    <property type="entry name" value="SECA_MOTOR_DEAD"/>
    <property type="match status" value="1"/>
</dbReference>
<gene>
    <name evidence="1" type="primary">secA</name>
    <name type="ordered locus">UPA3_0125</name>
</gene>
<proteinExistence type="inferred from homology"/>
<reference key="1">
    <citation type="submission" date="2008-02" db="EMBL/GenBank/DDBJ databases">
        <title>Genome sequence of Ureaplasma parvum serovar 3.</title>
        <authorList>
            <person name="Methe B.A."/>
            <person name="Glass J."/>
            <person name="Waites K."/>
            <person name="Shrivastava S."/>
        </authorList>
    </citation>
    <scope>NUCLEOTIDE SEQUENCE [LARGE SCALE GENOMIC DNA]</scope>
    <source>
        <strain>ATCC 27815 / 27 / NCTC 11736</strain>
    </source>
</reference>
<keyword id="KW-0067">ATP-binding</keyword>
<keyword id="KW-1003">Cell membrane</keyword>
<keyword id="KW-0963">Cytoplasm</keyword>
<keyword id="KW-0472">Membrane</keyword>
<keyword id="KW-0547">Nucleotide-binding</keyword>
<keyword id="KW-0653">Protein transport</keyword>
<keyword id="KW-1278">Translocase</keyword>
<keyword id="KW-0811">Translocation</keyword>
<keyword id="KW-0813">Transport</keyword>
<accession>B1AIA8</accession>
<protein>
    <recommendedName>
        <fullName evidence="1">Protein translocase subunit SecA</fullName>
        <ecNumber evidence="1">7.4.2.8</ecNumber>
    </recommendedName>
</protein>
<evidence type="ECO:0000255" key="1">
    <source>
        <dbReference type="HAMAP-Rule" id="MF_01382"/>
    </source>
</evidence>
<name>SECA_UREP2</name>
<organism>
    <name type="scientific">Ureaplasma parvum serovar 3 (strain ATCC 27815 / 27 / NCTC 11736)</name>
    <dbReference type="NCBI Taxonomy" id="505682"/>
    <lineage>
        <taxon>Bacteria</taxon>
        <taxon>Bacillati</taxon>
        <taxon>Mycoplasmatota</taxon>
        <taxon>Mycoplasmoidales</taxon>
        <taxon>Mycoplasmoidaceae</taxon>
        <taxon>Ureaplasma</taxon>
    </lineage>
</organism>
<sequence length="837" mass="96317">MNLISKISPQNRILNRARLIAEEVLKKEEEYEHFSDQELINKSDDIIEYLANNNPLDDKLVEALCIIREVIYRVHNKRAFKVQIIGAIIVYFGDFAEMMTGEGKTLTLVLVAYLNALYKKGVHMVTVNEYLVKVGAEFATPVLNFLNMSVGQITANMNEYEKRNNYNCDITYTTNSELGFDYLRDNMVTNYANKVQRGLWFAIVDEGDSVLIDEARTPLIISGEPQEEIGNYVKADRFVKTLYPQDFTLDPESQSVALTESGVEKAQKFFNTKNYYNFENSDIIHKVTNALRANFTFFNGREYIVKKDDDGEDIIALVDQSTGRIMEGRSYSAGLQQAIQAKEQIKIEPENLTVATITYQSLFRLYKKLAAVSGTAITEAEEFLNIYNMVVVTIPTNKPIKRIDHPDYVFDNKRTKWKYVIADVIRRHENGQPILIGTASVEDSEILHQLLERVNIPHEVLNAKNHAREAEIIACAGEYKAVTIATNMAGRGTDIKLSPESLEAGGLCVIGTERSDSRRIDNQLRGRAGRQGDIGESRFFISMEDTLFSRFATDNLAKADDKLSEDVISTKFFTRLLNNTQKKVESLNYDTRKNLIDYDHVLSNQRELIYKQRDKILISSDNKDILYRMLDSVIDDLIYQSHNKPNEDIIDIKKLIDLATQNIFYDNYLNQDEYYGLKFEQIKTKLKKDCINFFEQKEQLMTPTIFNQILSEIMISNIDEEWTKHLDITSKIREGVNLRAYEQKAPLNIYVEDSDKLFEKLKHNVAWKTVCSIGKINYVHQDYSDLNSEFIVNDNEINENNNSIDFENFNESIPTDQTIQESFDDNQSDNEDDKNNN</sequence>
<comment type="function">
    <text evidence="1">Part of the Sec protein translocase complex. Interacts with the SecYEG preprotein conducting channel. Has a central role in coupling the hydrolysis of ATP to the transfer of proteins into and across the cell membrane, serving as an ATP-driven molecular motor driving the stepwise translocation of polypeptide chains across the membrane.</text>
</comment>
<comment type="catalytic activity">
    <reaction evidence="1">
        <text>ATP + H2O + cellular proteinSide 1 = ADP + phosphate + cellular proteinSide 2.</text>
        <dbReference type="EC" id="7.4.2.8"/>
    </reaction>
</comment>
<comment type="subunit">
    <text evidence="1">Monomer and homodimer. Part of the essential Sec protein translocation apparatus which comprises SecA, SecYEG and auxiliary proteins SecDF. Other proteins may also be involved.</text>
</comment>
<comment type="subcellular location">
    <subcellularLocation>
        <location evidence="1">Cell membrane</location>
        <topology evidence="1">Peripheral membrane protein</topology>
        <orientation evidence="1">Cytoplasmic side</orientation>
    </subcellularLocation>
    <subcellularLocation>
        <location evidence="1">Cytoplasm</location>
    </subcellularLocation>
    <text evidence="1">Distribution is 50-50.</text>
</comment>
<comment type="similarity">
    <text evidence="1">Belongs to the SecA family.</text>
</comment>
<feature type="chain" id="PRO_1000145074" description="Protein translocase subunit SecA">
    <location>
        <begin position="1"/>
        <end position="837"/>
    </location>
</feature>
<feature type="binding site" evidence="1">
    <location>
        <position position="83"/>
    </location>
    <ligand>
        <name>ATP</name>
        <dbReference type="ChEBI" id="CHEBI:30616"/>
    </ligand>
</feature>
<feature type="binding site" evidence="1">
    <location>
        <begin position="101"/>
        <end position="105"/>
    </location>
    <ligand>
        <name>ATP</name>
        <dbReference type="ChEBI" id="CHEBI:30616"/>
    </ligand>
</feature>
<feature type="binding site" evidence="1">
    <location>
        <position position="494"/>
    </location>
    <ligand>
        <name>ATP</name>
        <dbReference type="ChEBI" id="CHEBI:30616"/>
    </ligand>
</feature>